<feature type="chain" id="PRO_1000090838" description="Cysteine--tRNA ligase">
    <location>
        <begin position="1"/>
        <end position="462"/>
    </location>
</feature>
<feature type="short sequence motif" description="'HIGH' region">
    <location>
        <begin position="29"/>
        <end position="39"/>
    </location>
</feature>
<feature type="short sequence motif" description="'KMSKS' region">
    <location>
        <begin position="266"/>
        <end position="270"/>
    </location>
</feature>
<feature type="binding site" evidence="1">
    <location>
        <position position="27"/>
    </location>
    <ligand>
        <name>Zn(2+)</name>
        <dbReference type="ChEBI" id="CHEBI:29105"/>
    </ligand>
</feature>
<feature type="binding site" evidence="1">
    <location>
        <position position="209"/>
    </location>
    <ligand>
        <name>Zn(2+)</name>
        <dbReference type="ChEBI" id="CHEBI:29105"/>
    </ligand>
</feature>
<feature type="binding site" evidence="1">
    <location>
        <position position="234"/>
    </location>
    <ligand>
        <name>Zn(2+)</name>
        <dbReference type="ChEBI" id="CHEBI:29105"/>
    </ligand>
</feature>
<feature type="binding site" evidence="1">
    <location>
        <position position="238"/>
    </location>
    <ligand>
        <name>Zn(2+)</name>
        <dbReference type="ChEBI" id="CHEBI:29105"/>
    </ligand>
</feature>
<feature type="binding site" evidence="1">
    <location>
        <position position="269"/>
    </location>
    <ligand>
        <name>ATP</name>
        <dbReference type="ChEBI" id="CHEBI:30616"/>
    </ligand>
</feature>
<evidence type="ECO:0000255" key="1">
    <source>
        <dbReference type="HAMAP-Rule" id="MF_00041"/>
    </source>
</evidence>
<dbReference type="EC" id="6.1.1.16" evidence="1"/>
<dbReference type="EMBL" id="AP008971">
    <property type="protein sequence ID" value="BAG07833.1"/>
    <property type="molecule type" value="Genomic_DNA"/>
</dbReference>
<dbReference type="RefSeq" id="WP_012290390.1">
    <property type="nucleotide sequence ID" value="NC_010376.1"/>
</dbReference>
<dbReference type="SMR" id="B0S0W3"/>
<dbReference type="STRING" id="334413.FMG_0415"/>
<dbReference type="KEGG" id="fma:FMG_0415"/>
<dbReference type="eggNOG" id="COG0215">
    <property type="taxonomic scope" value="Bacteria"/>
</dbReference>
<dbReference type="HOGENOM" id="CLU_013528_0_1_9"/>
<dbReference type="Proteomes" id="UP000001319">
    <property type="component" value="Chromosome"/>
</dbReference>
<dbReference type="GO" id="GO:0005829">
    <property type="term" value="C:cytosol"/>
    <property type="evidence" value="ECO:0007669"/>
    <property type="project" value="TreeGrafter"/>
</dbReference>
<dbReference type="GO" id="GO:0005524">
    <property type="term" value="F:ATP binding"/>
    <property type="evidence" value="ECO:0007669"/>
    <property type="project" value="UniProtKB-UniRule"/>
</dbReference>
<dbReference type="GO" id="GO:0004817">
    <property type="term" value="F:cysteine-tRNA ligase activity"/>
    <property type="evidence" value="ECO:0007669"/>
    <property type="project" value="UniProtKB-UniRule"/>
</dbReference>
<dbReference type="GO" id="GO:0008270">
    <property type="term" value="F:zinc ion binding"/>
    <property type="evidence" value="ECO:0007669"/>
    <property type="project" value="UniProtKB-UniRule"/>
</dbReference>
<dbReference type="GO" id="GO:0006423">
    <property type="term" value="P:cysteinyl-tRNA aminoacylation"/>
    <property type="evidence" value="ECO:0007669"/>
    <property type="project" value="UniProtKB-UniRule"/>
</dbReference>
<dbReference type="CDD" id="cd07963">
    <property type="entry name" value="Anticodon_Ia_Cys"/>
    <property type="match status" value="1"/>
</dbReference>
<dbReference type="CDD" id="cd00672">
    <property type="entry name" value="CysRS_core"/>
    <property type="match status" value="1"/>
</dbReference>
<dbReference type="FunFam" id="3.40.50.620:FF:000009">
    <property type="entry name" value="Cysteine--tRNA ligase"/>
    <property type="match status" value="1"/>
</dbReference>
<dbReference type="Gene3D" id="1.20.120.1910">
    <property type="entry name" value="Cysteine-tRNA ligase, C-terminal anti-codon recognition domain"/>
    <property type="match status" value="1"/>
</dbReference>
<dbReference type="Gene3D" id="3.40.50.620">
    <property type="entry name" value="HUPs"/>
    <property type="match status" value="1"/>
</dbReference>
<dbReference type="HAMAP" id="MF_00041">
    <property type="entry name" value="Cys_tRNA_synth"/>
    <property type="match status" value="1"/>
</dbReference>
<dbReference type="InterPro" id="IPR015803">
    <property type="entry name" value="Cys-tRNA-ligase"/>
</dbReference>
<dbReference type="InterPro" id="IPR015273">
    <property type="entry name" value="Cys-tRNA-synt_Ia_DALR"/>
</dbReference>
<dbReference type="InterPro" id="IPR024909">
    <property type="entry name" value="Cys-tRNA/MSH_ligase"/>
</dbReference>
<dbReference type="InterPro" id="IPR056411">
    <property type="entry name" value="CysS_C"/>
</dbReference>
<dbReference type="InterPro" id="IPR014729">
    <property type="entry name" value="Rossmann-like_a/b/a_fold"/>
</dbReference>
<dbReference type="InterPro" id="IPR032678">
    <property type="entry name" value="tRNA-synt_1_cat_dom"/>
</dbReference>
<dbReference type="InterPro" id="IPR009080">
    <property type="entry name" value="tRNAsynth_Ia_anticodon-bd"/>
</dbReference>
<dbReference type="NCBIfam" id="TIGR00435">
    <property type="entry name" value="cysS"/>
    <property type="match status" value="1"/>
</dbReference>
<dbReference type="PANTHER" id="PTHR10890:SF3">
    <property type="entry name" value="CYSTEINE--TRNA LIGASE, CYTOPLASMIC"/>
    <property type="match status" value="1"/>
</dbReference>
<dbReference type="PANTHER" id="PTHR10890">
    <property type="entry name" value="CYSTEINYL-TRNA SYNTHETASE"/>
    <property type="match status" value="1"/>
</dbReference>
<dbReference type="Pfam" id="PF23493">
    <property type="entry name" value="CysS_C"/>
    <property type="match status" value="1"/>
</dbReference>
<dbReference type="Pfam" id="PF09190">
    <property type="entry name" value="DALR_2"/>
    <property type="match status" value="1"/>
</dbReference>
<dbReference type="Pfam" id="PF01406">
    <property type="entry name" value="tRNA-synt_1e"/>
    <property type="match status" value="1"/>
</dbReference>
<dbReference type="PRINTS" id="PR00983">
    <property type="entry name" value="TRNASYNTHCYS"/>
</dbReference>
<dbReference type="SMART" id="SM00840">
    <property type="entry name" value="DALR_2"/>
    <property type="match status" value="1"/>
</dbReference>
<dbReference type="SUPFAM" id="SSF47323">
    <property type="entry name" value="Anticodon-binding domain of a subclass of class I aminoacyl-tRNA synthetases"/>
    <property type="match status" value="1"/>
</dbReference>
<dbReference type="SUPFAM" id="SSF52374">
    <property type="entry name" value="Nucleotidylyl transferase"/>
    <property type="match status" value="1"/>
</dbReference>
<organism>
    <name type="scientific">Finegoldia magna (strain ATCC 29328 / DSM 20472 / WAL 2508)</name>
    <name type="common">Peptostreptococcus magnus</name>
    <dbReference type="NCBI Taxonomy" id="334413"/>
    <lineage>
        <taxon>Bacteria</taxon>
        <taxon>Bacillati</taxon>
        <taxon>Bacillota</taxon>
        <taxon>Tissierellia</taxon>
        <taxon>Tissierellales</taxon>
        <taxon>Peptoniphilaceae</taxon>
        <taxon>Finegoldia</taxon>
    </lineage>
</organism>
<reference key="1">
    <citation type="journal article" date="2008" name="DNA Res.">
        <title>Complete genome sequence of Finegoldia magna, an anaerobic opportunistic pathogen.</title>
        <authorList>
            <person name="Goto T."/>
            <person name="Yamashita A."/>
            <person name="Hirakawa H."/>
            <person name="Matsutani M."/>
            <person name="Todo K."/>
            <person name="Ohshima K."/>
            <person name="Toh H."/>
            <person name="Miyamoto K."/>
            <person name="Kuhara S."/>
            <person name="Hattori M."/>
            <person name="Shimizu T."/>
            <person name="Akimoto S."/>
        </authorList>
    </citation>
    <scope>NUCLEOTIDE SEQUENCE [LARGE SCALE GENOMIC DNA]</scope>
    <source>
        <strain>ATCC 29328 / DSM 20472 / WAL 2508</strain>
    </source>
</reference>
<sequence length="462" mass="53941">MKLYNTLTRKKEEFKPIKEKNVGIYVCGPTVYNYIHVGNARPIVVFDTLRRYFIYKGYNVKFVSNFTDIDDKIINKAKDENIDFREITKKYIQAYLDNVSGLNFDEDDTIHPKATEYIDEMIKFVKTLEDKGAAYNVDGNVYFDITKAKDYGKLSKKNIDDLRAGARIDVNSEKKNPMDFALWKKRKEESEPAWESPWGMGRPGWHLECSVMSKTILGDTIDIHAGGEDLQFPHHENEIAQSETCTGAHFANYWLHNSMITVDKEKMSKSKNNFFLLKDIEKEFDLEVIRLWLLSVHYRNPIDFSHDTLVATKNSLDRLYTAKKFLNRILENSSEKEEKDDNIKTFREKFEQAMDDDINTADAISVLFDFIKYINKNYDENTSKNILLDAKKLMDDISYVLGILFKEDDDDLDSEIEELIEQRNAARKEKDFKKADEIRDKLLSMGIVLKDTRDGVIWERSN</sequence>
<gene>
    <name evidence="1" type="primary">cysS</name>
    <name type="ordered locus">FMG_0415</name>
</gene>
<name>SYC_FINM2</name>
<proteinExistence type="inferred from homology"/>
<accession>B0S0W3</accession>
<comment type="catalytic activity">
    <reaction evidence="1">
        <text>tRNA(Cys) + L-cysteine + ATP = L-cysteinyl-tRNA(Cys) + AMP + diphosphate</text>
        <dbReference type="Rhea" id="RHEA:17773"/>
        <dbReference type="Rhea" id="RHEA-COMP:9661"/>
        <dbReference type="Rhea" id="RHEA-COMP:9679"/>
        <dbReference type="ChEBI" id="CHEBI:30616"/>
        <dbReference type="ChEBI" id="CHEBI:33019"/>
        <dbReference type="ChEBI" id="CHEBI:35235"/>
        <dbReference type="ChEBI" id="CHEBI:78442"/>
        <dbReference type="ChEBI" id="CHEBI:78517"/>
        <dbReference type="ChEBI" id="CHEBI:456215"/>
        <dbReference type="EC" id="6.1.1.16"/>
    </reaction>
</comment>
<comment type="cofactor">
    <cofactor evidence="1">
        <name>Zn(2+)</name>
        <dbReference type="ChEBI" id="CHEBI:29105"/>
    </cofactor>
    <text evidence="1">Binds 1 zinc ion per subunit.</text>
</comment>
<comment type="subunit">
    <text evidence="1">Monomer.</text>
</comment>
<comment type="subcellular location">
    <subcellularLocation>
        <location evidence="1">Cytoplasm</location>
    </subcellularLocation>
</comment>
<comment type="similarity">
    <text evidence="1">Belongs to the class-I aminoacyl-tRNA synthetase family.</text>
</comment>
<keyword id="KW-0030">Aminoacyl-tRNA synthetase</keyword>
<keyword id="KW-0067">ATP-binding</keyword>
<keyword id="KW-0963">Cytoplasm</keyword>
<keyword id="KW-0436">Ligase</keyword>
<keyword id="KW-0479">Metal-binding</keyword>
<keyword id="KW-0547">Nucleotide-binding</keyword>
<keyword id="KW-0648">Protein biosynthesis</keyword>
<keyword id="KW-1185">Reference proteome</keyword>
<keyword id="KW-0862">Zinc</keyword>
<protein>
    <recommendedName>
        <fullName evidence="1">Cysteine--tRNA ligase</fullName>
        <ecNumber evidence="1">6.1.1.16</ecNumber>
    </recommendedName>
    <alternativeName>
        <fullName evidence="1">Cysteinyl-tRNA synthetase</fullName>
        <shortName evidence="1">CysRS</shortName>
    </alternativeName>
</protein>